<organism>
    <name type="scientific">Yersinia pestis</name>
    <dbReference type="NCBI Taxonomy" id="632"/>
    <lineage>
        <taxon>Bacteria</taxon>
        <taxon>Pseudomonadati</taxon>
        <taxon>Pseudomonadota</taxon>
        <taxon>Gammaproteobacteria</taxon>
        <taxon>Enterobacterales</taxon>
        <taxon>Yersiniaceae</taxon>
        <taxon>Yersinia</taxon>
    </lineage>
</organism>
<comment type="function">
    <text evidence="1">Catalyzes the pyruvoyl-dependent decarboxylation of aspartate to produce beta-alanine.</text>
</comment>
<comment type="catalytic activity">
    <reaction evidence="1">
        <text>L-aspartate + H(+) = beta-alanine + CO2</text>
        <dbReference type="Rhea" id="RHEA:19497"/>
        <dbReference type="ChEBI" id="CHEBI:15378"/>
        <dbReference type="ChEBI" id="CHEBI:16526"/>
        <dbReference type="ChEBI" id="CHEBI:29991"/>
        <dbReference type="ChEBI" id="CHEBI:57966"/>
        <dbReference type="EC" id="4.1.1.11"/>
    </reaction>
</comment>
<comment type="cofactor">
    <cofactor evidence="1">
        <name>pyruvate</name>
        <dbReference type="ChEBI" id="CHEBI:15361"/>
    </cofactor>
    <text evidence="1">Binds 1 pyruvoyl group covalently per subunit.</text>
</comment>
<comment type="pathway">
    <text evidence="1">Cofactor biosynthesis; (R)-pantothenate biosynthesis; beta-alanine from L-aspartate: step 1/1.</text>
</comment>
<comment type="subunit">
    <text evidence="1">Heterooctamer of four alpha and four beta subunits.</text>
</comment>
<comment type="subcellular location">
    <subcellularLocation>
        <location evidence="1">Cytoplasm</location>
    </subcellularLocation>
</comment>
<comment type="PTM">
    <text evidence="1">Is synthesized initially as an inactive proenzyme, which is activated by self-cleavage at a specific serine bond to produce a beta-subunit with a hydroxyl group at its C-terminus and an alpha-subunit with a pyruvoyl group at its N-terminus.</text>
</comment>
<comment type="similarity">
    <text evidence="1">Belongs to the PanD family.</text>
</comment>
<gene>
    <name evidence="1" type="primary">panD</name>
    <name type="ordered locus">YPO3403</name>
    <name type="ordered locus">y0784</name>
    <name type="ordered locus">YP_0282</name>
</gene>
<accession>Q8ZBK6</accession>
<accession>Q0WBP3</accession>
<evidence type="ECO:0000255" key="1">
    <source>
        <dbReference type="HAMAP-Rule" id="MF_00446"/>
    </source>
</evidence>
<proteinExistence type="inferred from homology"/>
<sequence>MIRTMLQGKLHRVKVTQADLHYEGSCAIDQDFLEAAGILEYEAIDIYNVDNGQRFSTYAIAAERGSRIISVNGAAARCACVGDKLIICSYVQMSYAAARLHHPKVAYFEGENQLQRKAKAVPVQVA</sequence>
<feature type="chain" id="PRO_0000023197" description="Aspartate 1-decarboxylase beta chain" evidence="1">
    <location>
        <begin position="1"/>
        <end position="24"/>
    </location>
</feature>
<feature type="chain" id="PRO_0000023198" description="Aspartate 1-decarboxylase alpha chain" evidence="1">
    <location>
        <begin position="25"/>
        <end position="126"/>
    </location>
</feature>
<feature type="active site" description="Schiff-base intermediate with substrate; via pyruvic acid" evidence="1">
    <location>
        <position position="25"/>
    </location>
</feature>
<feature type="active site" description="Proton donor" evidence="1">
    <location>
        <position position="58"/>
    </location>
</feature>
<feature type="binding site" evidence="1">
    <location>
        <position position="57"/>
    </location>
    <ligand>
        <name>substrate</name>
    </ligand>
</feature>
<feature type="binding site" evidence="1">
    <location>
        <begin position="73"/>
        <end position="75"/>
    </location>
    <ligand>
        <name>substrate</name>
    </ligand>
</feature>
<feature type="modified residue" description="Pyruvic acid (Ser)" evidence="1">
    <location>
        <position position="25"/>
    </location>
</feature>
<keyword id="KW-0068">Autocatalytic cleavage</keyword>
<keyword id="KW-0963">Cytoplasm</keyword>
<keyword id="KW-0210">Decarboxylase</keyword>
<keyword id="KW-0456">Lyase</keyword>
<keyword id="KW-0566">Pantothenate biosynthesis</keyword>
<keyword id="KW-0670">Pyruvate</keyword>
<keyword id="KW-1185">Reference proteome</keyword>
<keyword id="KW-0704">Schiff base</keyword>
<keyword id="KW-0865">Zymogen</keyword>
<dbReference type="EC" id="4.1.1.11" evidence="1"/>
<dbReference type="EMBL" id="AL590842">
    <property type="protein sequence ID" value="CAL21992.1"/>
    <property type="molecule type" value="Genomic_DNA"/>
</dbReference>
<dbReference type="EMBL" id="AE009952">
    <property type="protein sequence ID" value="AAM84371.1"/>
    <property type="molecule type" value="Genomic_DNA"/>
</dbReference>
<dbReference type="EMBL" id="AE017042">
    <property type="protein sequence ID" value="AAS60557.1"/>
    <property type="molecule type" value="Genomic_DNA"/>
</dbReference>
<dbReference type="PIR" id="AE0413">
    <property type="entry name" value="AE0413"/>
</dbReference>
<dbReference type="RefSeq" id="WP_002209347.1">
    <property type="nucleotide sequence ID" value="NZ_WUCM01000008.1"/>
</dbReference>
<dbReference type="RefSeq" id="YP_002348295.1">
    <property type="nucleotide sequence ID" value="NC_003143.1"/>
</dbReference>
<dbReference type="SMR" id="Q8ZBK6"/>
<dbReference type="IntAct" id="Q8ZBK6">
    <property type="interactions" value="1"/>
</dbReference>
<dbReference type="STRING" id="214092.YPO3403"/>
<dbReference type="PaxDb" id="214092-YPO3403"/>
<dbReference type="DNASU" id="1145731"/>
<dbReference type="EnsemblBacteria" id="AAS60557">
    <property type="protein sequence ID" value="AAS60557"/>
    <property type="gene ID" value="YP_0282"/>
</dbReference>
<dbReference type="GeneID" id="57975306"/>
<dbReference type="KEGG" id="ype:YPO3403"/>
<dbReference type="KEGG" id="ypk:y0784"/>
<dbReference type="KEGG" id="ypm:YP_0282"/>
<dbReference type="PATRIC" id="fig|214092.21.peg.3888"/>
<dbReference type="eggNOG" id="COG0853">
    <property type="taxonomic scope" value="Bacteria"/>
</dbReference>
<dbReference type="HOGENOM" id="CLU_115305_2_1_6"/>
<dbReference type="OMA" id="MLYSKIH"/>
<dbReference type="OrthoDB" id="9803983at2"/>
<dbReference type="UniPathway" id="UPA00028">
    <property type="reaction ID" value="UER00002"/>
</dbReference>
<dbReference type="Proteomes" id="UP000000815">
    <property type="component" value="Chromosome"/>
</dbReference>
<dbReference type="Proteomes" id="UP000001019">
    <property type="component" value="Chromosome"/>
</dbReference>
<dbReference type="Proteomes" id="UP000002490">
    <property type="component" value="Chromosome"/>
</dbReference>
<dbReference type="GO" id="GO:0005829">
    <property type="term" value="C:cytosol"/>
    <property type="evidence" value="ECO:0000318"/>
    <property type="project" value="GO_Central"/>
</dbReference>
<dbReference type="GO" id="GO:0004068">
    <property type="term" value="F:aspartate 1-decarboxylase activity"/>
    <property type="evidence" value="ECO:0000318"/>
    <property type="project" value="GO_Central"/>
</dbReference>
<dbReference type="GO" id="GO:0006523">
    <property type="term" value="P:alanine biosynthetic process"/>
    <property type="evidence" value="ECO:0000318"/>
    <property type="project" value="GO_Central"/>
</dbReference>
<dbReference type="GO" id="GO:0015940">
    <property type="term" value="P:pantothenate biosynthetic process"/>
    <property type="evidence" value="ECO:0000318"/>
    <property type="project" value="GO_Central"/>
</dbReference>
<dbReference type="CDD" id="cd06919">
    <property type="entry name" value="Asp_decarbox"/>
    <property type="match status" value="1"/>
</dbReference>
<dbReference type="FunFam" id="2.40.40.20:FF:000004">
    <property type="entry name" value="Aspartate 1-decarboxylase"/>
    <property type="match status" value="1"/>
</dbReference>
<dbReference type="Gene3D" id="2.40.40.20">
    <property type="match status" value="1"/>
</dbReference>
<dbReference type="HAMAP" id="MF_00446">
    <property type="entry name" value="PanD"/>
    <property type="match status" value="1"/>
</dbReference>
<dbReference type="InterPro" id="IPR009010">
    <property type="entry name" value="Asp_de-COase-like_dom_sf"/>
</dbReference>
<dbReference type="InterPro" id="IPR003190">
    <property type="entry name" value="Asp_decarbox"/>
</dbReference>
<dbReference type="NCBIfam" id="TIGR00223">
    <property type="entry name" value="panD"/>
    <property type="match status" value="1"/>
</dbReference>
<dbReference type="PANTHER" id="PTHR21012">
    <property type="entry name" value="ASPARTATE 1-DECARBOXYLASE"/>
    <property type="match status" value="1"/>
</dbReference>
<dbReference type="PANTHER" id="PTHR21012:SF0">
    <property type="entry name" value="ASPARTATE 1-DECARBOXYLASE"/>
    <property type="match status" value="1"/>
</dbReference>
<dbReference type="Pfam" id="PF02261">
    <property type="entry name" value="Asp_decarbox"/>
    <property type="match status" value="1"/>
</dbReference>
<dbReference type="PIRSF" id="PIRSF006246">
    <property type="entry name" value="Asp_decarbox"/>
    <property type="match status" value="1"/>
</dbReference>
<dbReference type="SUPFAM" id="SSF50692">
    <property type="entry name" value="ADC-like"/>
    <property type="match status" value="1"/>
</dbReference>
<protein>
    <recommendedName>
        <fullName evidence="1">Aspartate 1-decarboxylase</fullName>
        <ecNumber evidence="1">4.1.1.11</ecNumber>
    </recommendedName>
    <alternativeName>
        <fullName evidence="1">Aspartate alpha-decarboxylase</fullName>
    </alternativeName>
    <component>
        <recommendedName>
            <fullName evidence="1">Aspartate 1-decarboxylase beta chain</fullName>
        </recommendedName>
    </component>
    <component>
        <recommendedName>
            <fullName evidence="1">Aspartate 1-decarboxylase alpha chain</fullName>
        </recommendedName>
    </component>
</protein>
<reference key="1">
    <citation type="journal article" date="2001" name="Nature">
        <title>Genome sequence of Yersinia pestis, the causative agent of plague.</title>
        <authorList>
            <person name="Parkhill J."/>
            <person name="Wren B.W."/>
            <person name="Thomson N.R."/>
            <person name="Titball R.W."/>
            <person name="Holden M.T.G."/>
            <person name="Prentice M.B."/>
            <person name="Sebaihia M."/>
            <person name="James K.D."/>
            <person name="Churcher C.M."/>
            <person name="Mungall K.L."/>
            <person name="Baker S."/>
            <person name="Basham D."/>
            <person name="Bentley S.D."/>
            <person name="Brooks K."/>
            <person name="Cerdeno-Tarraga A.-M."/>
            <person name="Chillingworth T."/>
            <person name="Cronin A."/>
            <person name="Davies R.M."/>
            <person name="Davis P."/>
            <person name="Dougan G."/>
            <person name="Feltwell T."/>
            <person name="Hamlin N."/>
            <person name="Holroyd S."/>
            <person name="Jagels K."/>
            <person name="Karlyshev A.V."/>
            <person name="Leather S."/>
            <person name="Moule S."/>
            <person name="Oyston P.C.F."/>
            <person name="Quail M.A."/>
            <person name="Rutherford K.M."/>
            <person name="Simmonds M."/>
            <person name="Skelton J."/>
            <person name="Stevens K."/>
            <person name="Whitehead S."/>
            <person name="Barrell B.G."/>
        </authorList>
    </citation>
    <scope>NUCLEOTIDE SEQUENCE [LARGE SCALE GENOMIC DNA]</scope>
    <source>
        <strain>CO-92 / Biovar Orientalis</strain>
    </source>
</reference>
<reference key="2">
    <citation type="journal article" date="2002" name="J. Bacteriol.">
        <title>Genome sequence of Yersinia pestis KIM.</title>
        <authorList>
            <person name="Deng W."/>
            <person name="Burland V."/>
            <person name="Plunkett G. III"/>
            <person name="Boutin A."/>
            <person name="Mayhew G.F."/>
            <person name="Liss P."/>
            <person name="Perna N.T."/>
            <person name="Rose D.J."/>
            <person name="Mau B."/>
            <person name="Zhou S."/>
            <person name="Schwartz D.C."/>
            <person name="Fetherston J.D."/>
            <person name="Lindler L.E."/>
            <person name="Brubaker R.R."/>
            <person name="Plano G.V."/>
            <person name="Straley S.C."/>
            <person name="McDonough K.A."/>
            <person name="Nilles M.L."/>
            <person name="Matson J.S."/>
            <person name="Blattner F.R."/>
            <person name="Perry R.D."/>
        </authorList>
    </citation>
    <scope>NUCLEOTIDE SEQUENCE [LARGE SCALE GENOMIC DNA]</scope>
    <source>
        <strain>KIM10+ / Biovar Mediaevalis</strain>
    </source>
</reference>
<reference key="3">
    <citation type="journal article" date="2004" name="DNA Res.">
        <title>Complete genome sequence of Yersinia pestis strain 91001, an isolate avirulent to humans.</title>
        <authorList>
            <person name="Song Y."/>
            <person name="Tong Z."/>
            <person name="Wang J."/>
            <person name="Wang L."/>
            <person name="Guo Z."/>
            <person name="Han Y."/>
            <person name="Zhang J."/>
            <person name="Pei D."/>
            <person name="Zhou D."/>
            <person name="Qin H."/>
            <person name="Pang X."/>
            <person name="Han Y."/>
            <person name="Zhai J."/>
            <person name="Li M."/>
            <person name="Cui B."/>
            <person name="Qi Z."/>
            <person name="Jin L."/>
            <person name="Dai R."/>
            <person name="Chen F."/>
            <person name="Li S."/>
            <person name="Ye C."/>
            <person name="Du Z."/>
            <person name="Lin W."/>
            <person name="Wang J."/>
            <person name="Yu J."/>
            <person name="Yang H."/>
            <person name="Wang J."/>
            <person name="Huang P."/>
            <person name="Yang R."/>
        </authorList>
    </citation>
    <scope>NUCLEOTIDE SEQUENCE [LARGE SCALE GENOMIC DNA]</scope>
    <source>
        <strain>91001 / Biovar Mediaevalis</strain>
    </source>
</reference>
<name>PAND_YERPE</name>